<organism>
    <name type="scientific">Dictyostelium discoideum</name>
    <name type="common">Social amoeba</name>
    <dbReference type="NCBI Taxonomy" id="44689"/>
    <lineage>
        <taxon>Eukaryota</taxon>
        <taxon>Amoebozoa</taxon>
        <taxon>Evosea</taxon>
        <taxon>Eumycetozoa</taxon>
        <taxon>Dictyostelia</taxon>
        <taxon>Dictyosteliales</taxon>
        <taxon>Dictyosteliaceae</taxon>
        <taxon>Dictyostelium</taxon>
    </lineage>
</organism>
<accession>Q54ER7</accession>
<sequence length="555" mass="60981">MSQMIRPPIVLLKEGTDTSQGLPQLISNINACCAIVDTVRTTLGPRGMDKLIYQSERQVTISNDGATVMKLLDIVHPAARTLVDIAKSQDSEVGDGTTSVVILAGEFLKAAKPFLEEGIHPQIIIRAFRSACELAKQKIQELSVDIKPENMREFLEKCASTSMNSKLIASHKQFFSKMVVDAVQLLDDNIDLDMIGIKKESGGGLGDSQFIAGAAFKRTFFYAGFEQQPKHIKNPKVLCLNIELELKAEKDNAEIRISDPTKYQSLVNAEWKLFFDKLEAIHASGVNVVLSKLAIGDLATQFFADKNMFCAGRVPDDDIRRVCRATGAAIQNTTSNIIPDVIGTCDLFEEVQVGGQRYNLFTGCTMTQTATIILRGGGEQFIDEAERSLHDSIMIVRRARKHRSVVAGGGAIEMEVSKYLRDYSLSIEGKKQLLINAFAKALEVIPRQIADNAGFDSTDILNQLRQKHAQGEKWFGVDIVNEGICDTYESAIWEPSLVKLNSIVAATEATCLILSVDETVQNNQAEQAQAGPQINNQTRQALSRGRGVQAMRGRG</sequence>
<dbReference type="EMBL" id="AAFI02000177">
    <property type="protein sequence ID" value="EAL61596.1"/>
    <property type="molecule type" value="Genomic_DNA"/>
</dbReference>
<dbReference type="RefSeq" id="XP_635173.1">
    <property type="nucleotide sequence ID" value="XM_630081.1"/>
</dbReference>
<dbReference type="SMR" id="Q54ER7"/>
<dbReference type="FunCoup" id="Q54ER7">
    <property type="interactions" value="1105"/>
</dbReference>
<dbReference type="STRING" id="44689.Q54ER7"/>
<dbReference type="PaxDb" id="44689-DDB0191096"/>
<dbReference type="EnsemblProtists" id="EAL61596">
    <property type="protein sequence ID" value="EAL61596"/>
    <property type="gene ID" value="DDB_G0291225"/>
</dbReference>
<dbReference type="GeneID" id="8628119"/>
<dbReference type="KEGG" id="ddi:DDB_G0291225"/>
<dbReference type="dictyBase" id="DDB_G0291225">
    <property type="gene designation" value="cct7"/>
</dbReference>
<dbReference type="VEuPathDB" id="AmoebaDB:DDB_G0291225"/>
<dbReference type="eggNOG" id="KOG0361">
    <property type="taxonomic scope" value="Eukaryota"/>
</dbReference>
<dbReference type="HOGENOM" id="CLU_008891_7_1_1"/>
<dbReference type="InParanoid" id="Q54ER7"/>
<dbReference type="OMA" id="HRKGNTW"/>
<dbReference type="PhylomeDB" id="Q54ER7"/>
<dbReference type="BRENDA" id="3.6.4.B10">
    <property type="organism ID" value="1939"/>
</dbReference>
<dbReference type="Reactome" id="R-DDI-390471">
    <property type="pathway name" value="Association of TriC/CCT with target proteins during biosynthesis"/>
</dbReference>
<dbReference type="Reactome" id="R-DDI-6814122">
    <property type="pathway name" value="Cooperation of PDCL (PhLP1) and TRiC/CCT in G-protein beta folding"/>
</dbReference>
<dbReference type="Reactome" id="R-DDI-9013418">
    <property type="pathway name" value="RHOBTB2 GTPase cycle"/>
</dbReference>
<dbReference type="Reactome" id="R-DDI-9013422">
    <property type="pathway name" value="RHOBTB1 GTPase cycle"/>
</dbReference>
<dbReference type="PRO" id="PR:Q54ER7"/>
<dbReference type="Proteomes" id="UP000002195">
    <property type="component" value="Chromosome 6"/>
</dbReference>
<dbReference type="GO" id="GO:0005832">
    <property type="term" value="C:chaperonin-containing T-complex"/>
    <property type="evidence" value="ECO:0000250"/>
    <property type="project" value="dictyBase"/>
</dbReference>
<dbReference type="GO" id="GO:0005524">
    <property type="term" value="F:ATP binding"/>
    <property type="evidence" value="ECO:0007669"/>
    <property type="project" value="UniProtKB-KW"/>
</dbReference>
<dbReference type="GO" id="GO:0016887">
    <property type="term" value="F:ATP hydrolysis activity"/>
    <property type="evidence" value="ECO:0007669"/>
    <property type="project" value="InterPro"/>
</dbReference>
<dbReference type="GO" id="GO:0140662">
    <property type="term" value="F:ATP-dependent protein folding chaperone"/>
    <property type="evidence" value="ECO:0007669"/>
    <property type="project" value="InterPro"/>
</dbReference>
<dbReference type="GO" id="GO:0051082">
    <property type="term" value="F:unfolded protein binding"/>
    <property type="evidence" value="ECO:0000318"/>
    <property type="project" value="GO_Central"/>
</dbReference>
<dbReference type="GO" id="GO:0006457">
    <property type="term" value="P:protein folding"/>
    <property type="evidence" value="ECO:0000318"/>
    <property type="project" value="GO_Central"/>
</dbReference>
<dbReference type="CDD" id="cd03340">
    <property type="entry name" value="TCP1_eta"/>
    <property type="match status" value="1"/>
</dbReference>
<dbReference type="FunFam" id="1.10.560.10:FF:000017">
    <property type="entry name" value="T-complex protein 1 subunit eta"/>
    <property type="match status" value="1"/>
</dbReference>
<dbReference type="FunFam" id="1.10.560.10:FF:000045">
    <property type="entry name" value="T-complex protein 1 subunit eta"/>
    <property type="match status" value="1"/>
</dbReference>
<dbReference type="FunFam" id="3.30.260.10:FF:000022">
    <property type="entry name" value="T-complex protein 1 subunit eta"/>
    <property type="match status" value="1"/>
</dbReference>
<dbReference type="FunFam" id="3.50.7.10:FF:000006">
    <property type="entry name" value="T-complex protein 1 subunit eta"/>
    <property type="match status" value="1"/>
</dbReference>
<dbReference type="Gene3D" id="3.50.7.10">
    <property type="entry name" value="GroEL"/>
    <property type="match status" value="1"/>
</dbReference>
<dbReference type="Gene3D" id="1.10.560.10">
    <property type="entry name" value="GroEL-like equatorial domain"/>
    <property type="match status" value="1"/>
</dbReference>
<dbReference type="Gene3D" id="3.30.260.10">
    <property type="entry name" value="TCP-1-like chaperonin intermediate domain"/>
    <property type="match status" value="1"/>
</dbReference>
<dbReference type="InterPro" id="IPR012720">
    <property type="entry name" value="Chap_CCT_eta"/>
</dbReference>
<dbReference type="InterPro" id="IPR017998">
    <property type="entry name" value="Chaperone_TCP-1"/>
</dbReference>
<dbReference type="InterPro" id="IPR002194">
    <property type="entry name" value="Chaperonin_TCP-1_CS"/>
</dbReference>
<dbReference type="InterPro" id="IPR002423">
    <property type="entry name" value="Cpn60/GroEL/TCP-1"/>
</dbReference>
<dbReference type="InterPro" id="IPR027409">
    <property type="entry name" value="GroEL-like_apical_dom_sf"/>
</dbReference>
<dbReference type="InterPro" id="IPR027413">
    <property type="entry name" value="GROEL-like_equatorial_sf"/>
</dbReference>
<dbReference type="InterPro" id="IPR027410">
    <property type="entry name" value="TCP-1-like_intermed_sf"/>
</dbReference>
<dbReference type="InterPro" id="IPR053374">
    <property type="entry name" value="TCP-1_chaperonin"/>
</dbReference>
<dbReference type="InterPro" id="IPR054827">
    <property type="entry name" value="thermosome_alpha"/>
</dbReference>
<dbReference type="NCBIfam" id="TIGR02345">
    <property type="entry name" value="chap_CCT_eta"/>
    <property type="match status" value="1"/>
</dbReference>
<dbReference type="NCBIfam" id="NF041082">
    <property type="entry name" value="thermosome_alpha"/>
    <property type="match status" value="1"/>
</dbReference>
<dbReference type="NCBIfam" id="NF041083">
    <property type="entry name" value="thermosome_beta"/>
    <property type="match status" value="1"/>
</dbReference>
<dbReference type="PANTHER" id="PTHR11353">
    <property type="entry name" value="CHAPERONIN"/>
    <property type="match status" value="1"/>
</dbReference>
<dbReference type="Pfam" id="PF00118">
    <property type="entry name" value="Cpn60_TCP1"/>
    <property type="match status" value="1"/>
</dbReference>
<dbReference type="PRINTS" id="PR00304">
    <property type="entry name" value="TCOMPLEXTCP1"/>
</dbReference>
<dbReference type="SUPFAM" id="SSF52029">
    <property type="entry name" value="GroEL apical domain-like"/>
    <property type="match status" value="1"/>
</dbReference>
<dbReference type="SUPFAM" id="SSF48592">
    <property type="entry name" value="GroEL equatorial domain-like"/>
    <property type="match status" value="1"/>
</dbReference>
<dbReference type="SUPFAM" id="SSF54849">
    <property type="entry name" value="GroEL-intermediate domain like"/>
    <property type="match status" value="1"/>
</dbReference>
<dbReference type="PROSITE" id="PS00750">
    <property type="entry name" value="TCP1_1"/>
    <property type="match status" value="1"/>
</dbReference>
<dbReference type="PROSITE" id="PS00751">
    <property type="entry name" value="TCP1_2"/>
    <property type="match status" value="1"/>
</dbReference>
<dbReference type="PROSITE" id="PS00995">
    <property type="entry name" value="TCP1_3"/>
    <property type="match status" value="1"/>
</dbReference>
<reference key="1">
    <citation type="journal article" date="2005" name="Nature">
        <title>The genome of the social amoeba Dictyostelium discoideum.</title>
        <authorList>
            <person name="Eichinger L."/>
            <person name="Pachebat J.A."/>
            <person name="Gloeckner G."/>
            <person name="Rajandream M.A."/>
            <person name="Sucgang R."/>
            <person name="Berriman M."/>
            <person name="Song J."/>
            <person name="Olsen R."/>
            <person name="Szafranski K."/>
            <person name="Xu Q."/>
            <person name="Tunggal B."/>
            <person name="Kummerfeld S."/>
            <person name="Madera M."/>
            <person name="Konfortov B.A."/>
            <person name="Rivero F."/>
            <person name="Bankier A.T."/>
            <person name="Lehmann R."/>
            <person name="Hamlin N."/>
            <person name="Davies R."/>
            <person name="Gaudet P."/>
            <person name="Fey P."/>
            <person name="Pilcher K."/>
            <person name="Chen G."/>
            <person name="Saunders D."/>
            <person name="Sodergren E.J."/>
            <person name="Davis P."/>
            <person name="Kerhornou A."/>
            <person name="Nie X."/>
            <person name="Hall N."/>
            <person name="Anjard C."/>
            <person name="Hemphill L."/>
            <person name="Bason N."/>
            <person name="Farbrother P."/>
            <person name="Desany B."/>
            <person name="Just E."/>
            <person name="Morio T."/>
            <person name="Rost R."/>
            <person name="Churcher C.M."/>
            <person name="Cooper J."/>
            <person name="Haydock S."/>
            <person name="van Driessche N."/>
            <person name="Cronin A."/>
            <person name="Goodhead I."/>
            <person name="Muzny D.M."/>
            <person name="Mourier T."/>
            <person name="Pain A."/>
            <person name="Lu M."/>
            <person name="Harper D."/>
            <person name="Lindsay R."/>
            <person name="Hauser H."/>
            <person name="James K.D."/>
            <person name="Quiles M."/>
            <person name="Madan Babu M."/>
            <person name="Saito T."/>
            <person name="Buchrieser C."/>
            <person name="Wardroper A."/>
            <person name="Felder M."/>
            <person name="Thangavelu M."/>
            <person name="Johnson D."/>
            <person name="Knights A."/>
            <person name="Loulseged H."/>
            <person name="Mungall K.L."/>
            <person name="Oliver K."/>
            <person name="Price C."/>
            <person name="Quail M.A."/>
            <person name="Urushihara H."/>
            <person name="Hernandez J."/>
            <person name="Rabbinowitsch E."/>
            <person name="Steffen D."/>
            <person name="Sanders M."/>
            <person name="Ma J."/>
            <person name="Kohara Y."/>
            <person name="Sharp S."/>
            <person name="Simmonds M.N."/>
            <person name="Spiegler S."/>
            <person name="Tivey A."/>
            <person name="Sugano S."/>
            <person name="White B."/>
            <person name="Walker D."/>
            <person name="Woodward J.R."/>
            <person name="Winckler T."/>
            <person name="Tanaka Y."/>
            <person name="Shaulsky G."/>
            <person name="Schleicher M."/>
            <person name="Weinstock G.M."/>
            <person name="Rosenthal A."/>
            <person name="Cox E.C."/>
            <person name="Chisholm R.L."/>
            <person name="Gibbs R.A."/>
            <person name="Loomis W.F."/>
            <person name="Platzer M."/>
            <person name="Kay R.R."/>
            <person name="Williams J.G."/>
            <person name="Dear P.H."/>
            <person name="Noegel A.A."/>
            <person name="Barrell B.G."/>
            <person name="Kuspa A."/>
        </authorList>
    </citation>
    <scope>NUCLEOTIDE SEQUENCE [LARGE SCALE GENOMIC DNA]</scope>
    <source>
        <strain>AX4</strain>
    </source>
</reference>
<proteinExistence type="inferred from homology"/>
<feature type="chain" id="PRO_0000327899" description="T-complex protein 1 subunit eta">
    <location>
        <begin position="1"/>
        <end position="555"/>
    </location>
</feature>
<evidence type="ECO:0000250" key="1"/>
<evidence type="ECO:0000305" key="2"/>
<name>TCPH_DICDI</name>
<keyword id="KW-0067">ATP-binding</keyword>
<keyword id="KW-0143">Chaperone</keyword>
<keyword id="KW-0963">Cytoplasm</keyword>
<keyword id="KW-0547">Nucleotide-binding</keyword>
<keyword id="KW-1185">Reference proteome</keyword>
<gene>
    <name type="primary">cct7</name>
    <name type="ORF">DDB_G0291225</name>
</gene>
<comment type="function">
    <text evidence="1">Molecular chaperone; assists the folding of proteins upon ATP hydrolysis. Known to play a role, in vitro, in the folding of actin and tubulin (By similarity).</text>
</comment>
<comment type="subunit">
    <text evidence="1">Heterooligomeric complex of about 850 to 900 kDa that forms two stacked rings, 12 to 16 nm in diameter.</text>
</comment>
<comment type="subcellular location">
    <subcellularLocation>
        <location evidence="1">Cytoplasm</location>
    </subcellularLocation>
</comment>
<comment type="similarity">
    <text evidence="2">Belongs to the TCP-1 chaperonin family.</text>
</comment>
<protein>
    <recommendedName>
        <fullName>T-complex protein 1 subunit eta</fullName>
        <shortName>TCP-1-eta</shortName>
    </recommendedName>
    <alternativeName>
        <fullName>CCT-eta</fullName>
    </alternativeName>
</protein>